<accession>Q1I5V6</accession>
<protein>
    <recommendedName>
        <fullName evidence="1">Elongation factor 4</fullName>
        <shortName evidence="1">EF-4</shortName>
        <ecNumber evidence="1">3.6.5.n1</ecNumber>
    </recommendedName>
    <alternativeName>
        <fullName evidence="1">Ribosomal back-translocase LepA</fullName>
    </alternativeName>
</protein>
<dbReference type="EC" id="3.6.5.n1" evidence="1"/>
<dbReference type="EMBL" id="CT573326">
    <property type="protein sequence ID" value="CAK16979.1"/>
    <property type="molecule type" value="Genomic_DNA"/>
</dbReference>
<dbReference type="RefSeq" id="WP_011535350.1">
    <property type="nucleotide sequence ID" value="NC_008027.1"/>
</dbReference>
<dbReference type="SMR" id="Q1I5V6"/>
<dbReference type="STRING" id="384676.PSEEN4292"/>
<dbReference type="GeneID" id="32807297"/>
<dbReference type="KEGG" id="pen:PSEEN4292"/>
<dbReference type="eggNOG" id="COG0481">
    <property type="taxonomic scope" value="Bacteria"/>
</dbReference>
<dbReference type="HOGENOM" id="CLU_009995_3_3_6"/>
<dbReference type="OrthoDB" id="9801472at2"/>
<dbReference type="Proteomes" id="UP000000658">
    <property type="component" value="Chromosome"/>
</dbReference>
<dbReference type="GO" id="GO:0005886">
    <property type="term" value="C:plasma membrane"/>
    <property type="evidence" value="ECO:0007669"/>
    <property type="project" value="UniProtKB-SubCell"/>
</dbReference>
<dbReference type="GO" id="GO:0005525">
    <property type="term" value="F:GTP binding"/>
    <property type="evidence" value="ECO:0007669"/>
    <property type="project" value="UniProtKB-UniRule"/>
</dbReference>
<dbReference type="GO" id="GO:0003924">
    <property type="term" value="F:GTPase activity"/>
    <property type="evidence" value="ECO:0007669"/>
    <property type="project" value="UniProtKB-UniRule"/>
</dbReference>
<dbReference type="GO" id="GO:0097216">
    <property type="term" value="F:guanosine tetraphosphate binding"/>
    <property type="evidence" value="ECO:0007669"/>
    <property type="project" value="UniProtKB-ARBA"/>
</dbReference>
<dbReference type="GO" id="GO:0043022">
    <property type="term" value="F:ribosome binding"/>
    <property type="evidence" value="ECO:0007669"/>
    <property type="project" value="UniProtKB-UniRule"/>
</dbReference>
<dbReference type="GO" id="GO:0003746">
    <property type="term" value="F:translation elongation factor activity"/>
    <property type="evidence" value="ECO:0007669"/>
    <property type="project" value="UniProtKB-UniRule"/>
</dbReference>
<dbReference type="GO" id="GO:0045727">
    <property type="term" value="P:positive regulation of translation"/>
    <property type="evidence" value="ECO:0007669"/>
    <property type="project" value="UniProtKB-UniRule"/>
</dbReference>
<dbReference type="CDD" id="cd03699">
    <property type="entry name" value="EF4_II"/>
    <property type="match status" value="1"/>
</dbReference>
<dbReference type="CDD" id="cd16260">
    <property type="entry name" value="EF4_III"/>
    <property type="match status" value="1"/>
</dbReference>
<dbReference type="CDD" id="cd01890">
    <property type="entry name" value="LepA"/>
    <property type="match status" value="1"/>
</dbReference>
<dbReference type="CDD" id="cd03709">
    <property type="entry name" value="lepA_C"/>
    <property type="match status" value="1"/>
</dbReference>
<dbReference type="FunFam" id="3.40.50.300:FF:000078">
    <property type="entry name" value="Elongation factor 4"/>
    <property type="match status" value="1"/>
</dbReference>
<dbReference type="FunFam" id="2.40.30.10:FF:000015">
    <property type="entry name" value="Translation factor GUF1, mitochondrial"/>
    <property type="match status" value="1"/>
</dbReference>
<dbReference type="FunFam" id="3.30.70.240:FF:000007">
    <property type="entry name" value="Translation factor GUF1, mitochondrial"/>
    <property type="match status" value="1"/>
</dbReference>
<dbReference type="FunFam" id="3.30.70.2570:FF:000001">
    <property type="entry name" value="Translation factor GUF1, mitochondrial"/>
    <property type="match status" value="1"/>
</dbReference>
<dbReference type="FunFam" id="3.30.70.870:FF:000004">
    <property type="entry name" value="Translation factor GUF1, mitochondrial"/>
    <property type="match status" value="1"/>
</dbReference>
<dbReference type="Gene3D" id="3.30.70.240">
    <property type="match status" value="1"/>
</dbReference>
<dbReference type="Gene3D" id="3.30.70.2570">
    <property type="entry name" value="Elongation factor 4, C-terminal domain"/>
    <property type="match status" value="1"/>
</dbReference>
<dbReference type="Gene3D" id="3.30.70.870">
    <property type="entry name" value="Elongation Factor G (Translational Gtpase), domain 3"/>
    <property type="match status" value="1"/>
</dbReference>
<dbReference type="Gene3D" id="3.40.50.300">
    <property type="entry name" value="P-loop containing nucleotide triphosphate hydrolases"/>
    <property type="match status" value="1"/>
</dbReference>
<dbReference type="Gene3D" id="2.40.30.10">
    <property type="entry name" value="Translation factors"/>
    <property type="match status" value="1"/>
</dbReference>
<dbReference type="HAMAP" id="MF_00071">
    <property type="entry name" value="LepA"/>
    <property type="match status" value="1"/>
</dbReference>
<dbReference type="InterPro" id="IPR006297">
    <property type="entry name" value="EF-4"/>
</dbReference>
<dbReference type="InterPro" id="IPR035647">
    <property type="entry name" value="EFG_III/V"/>
</dbReference>
<dbReference type="InterPro" id="IPR000640">
    <property type="entry name" value="EFG_V-like"/>
</dbReference>
<dbReference type="InterPro" id="IPR004161">
    <property type="entry name" value="EFTu-like_2"/>
</dbReference>
<dbReference type="InterPro" id="IPR038363">
    <property type="entry name" value="LepA_C_sf"/>
</dbReference>
<dbReference type="InterPro" id="IPR013842">
    <property type="entry name" value="LepA_CTD"/>
</dbReference>
<dbReference type="InterPro" id="IPR035654">
    <property type="entry name" value="LepA_IV"/>
</dbReference>
<dbReference type="InterPro" id="IPR027417">
    <property type="entry name" value="P-loop_NTPase"/>
</dbReference>
<dbReference type="InterPro" id="IPR005225">
    <property type="entry name" value="Small_GTP-bd"/>
</dbReference>
<dbReference type="InterPro" id="IPR000795">
    <property type="entry name" value="T_Tr_GTP-bd_dom"/>
</dbReference>
<dbReference type="NCBIfam" id="TIGR01393">
    <property type="entry name" value="lepA"/>
    <property type="match status" value="1"/>
</dbReference>
<dbReference type="NCBIfam" id="TIGR00231">
    <property type="entry name" value="small_GTP"/>
    <property type="match status" value="1"/>
</dbReference>
<dbReference type="PANTHER" id="PTHR43512:SF4">
    <property type="entry name" value="TRANSLATION FACTOR GUF1 HOMOLOG, CHLOROPLASTIC"/>
    <property type="match status" value="1"/>
</dbReference>
<dbReference type="PANTHER" id="PTHR43512">
    <property type="entry name" value="TRANSLATION FACTOR GUF1-RELATED"/>
    <property type="match status" value="1"/>
</dbReference>
<dbReference type="Pfam" id="PF00679">
    <property type="entry name" value="EFG_C"/>
    <property type="match status" value="1"/>
</dbReference>
<dbReference type="Pfam" id="PF00009">
    <property type="entry name" value="GTP_EFTU"/>
    <property type="match status" value="1"/>
</dbReference>
<dbReference type="Pfam" id="PF03144">
    <property type="entry name" value="GTP_EFTU_D2"/>
    <property type="match status" value="1"/>
</dbReference>
<dbReference type="Pfam" id="PF06421">
    <property type="entry name" value="LepA_C"/>
    <property type="match status" value="1"/>
</dbReference>
<dbReference type="PRINTS" id="PR00315">
    <property type="entry name" value="ELONGATNFCT"/>
</dbReference>
<dbReference type="SUPFAM" id="SSF54980">
    <property type="entry name" value="EF-G C-terminal domain-like"/>
    <property type="match status" value="2"/>
</dbReference>
<dbReference type="SUPFAM" id="SSF52540">
    <property type="entry name" value="P-loop containing nucleoside triphosphate hydrolases"/>
    <property type="match status" value="1"/>
</dbReference>
<dbReference type="PROSITE" id="PS51722">
    <property type="entry name" value="G_TR_2"/>
    <property type="match status" value="1"/>
</dbReference>
<name>LEPA_PSEE4</name>
<comment type="function">
    <text evidence="1">Required for accurate and efficient protein synthesis under certain stress conditions. May act as a fidelity factor of the translation reaction, by catalyzing a one-codon backward translocation of tRNAs on improperly translocated ribosomes. Back-translocation proceeds from a post-translocation (POST) complex to a pre-translocation (PRE) complex, thus giving elongation factor G a second chance to translocate the tRNAs correctly. Binds to ribosomes in a GTP-dependent manner.</text>
</comment>
<comment type="catalytic activity">
    <reaction evidence="1">
        <text>GTP + H2O = GDP + phosphate + H(+)</text>
        <dbReference type="Rhea" id="RHEA:19669"/>
        <dbReference type="ChEBI" id="CHEBI:15377"/>
        <dbReference type="ChEBI" id="CHEBI:15378"/>
        <dbReference type="ChEBI" id="CHEBI:37565"/>
        <dbReference type="ChEBI" id="CHEBI:43474"/>
        <dbReference type="ChEBI" id="CHEBI:58189"/>
        <dbReference type="EC" id="3.6.5.n1"/>
    </reaction>
</comment>
<comment type="subcellular location">
    <subcellularLocation>
        <location evidence="1">Cell inner membrane</location>
        <topology evidence="1">Peripheral membrane protein</topology>
        <orientation evidence="1">Cytoplasmic side</orientation>
    </subcellularLocation>
</comment>
<comment type="similarity">
    <text evidence="1">Belongs to the TRAFAC class translation factor GTPase superfamily. Classic translation factor GTPase family. LepA subfamily.</text>
</comment>
<gene>
    <name evidence="1" type="primary">lepA</name>
    <name type="ordered locus">PSEEN4292</name>
</gene>
<organism>
    <name type="scientific">Pseudomonas entomophila (strain L48)</name>
    <dbReference type="NCBI Taxonomy" id="384676"/>
    <lineage>
        <taxon>Bacteria</taxon>
        <taxon>Pseudomonadati</taxon>
        <taxon>Pseudomonadota</taxon>
        <taxon>Gammaproteobacteria</taxon>
        <taxon>Pseudomonadales</taxon>
        <taxon>Pseudomonadaceae</taxon>
        <taxon>Pseudomonas</taxon>
    </lineage>
</organism>
<feature type="chain" id="PRO_1000032039" description="Elongation factor 4">
    <location>
        <begin position="1"/>
        <end position="599"/>
    </location>
</feature>
<feature type="domain" description="tr-type G">
    <location>
        <begin position="5"/>
        <end position="187"/>
    </location>
</feature>
<feature type="binding site" evidence="1">
    <location>
        <begin position="17"/>
        <end position="22"/>
    </location>
    <ligand>
        <name>GTP</name>
        <dbReference type="ChEBI" id="CHEBI:37565"/>
    </ligand>
</feature>
<feature type="binding site" evidence="1">
    <location>
        <begin position="134"/>
        <end position="137"/>
    </location>
    <ligand>
        <name>GTP</name>
        <dbReference type="ChEBI" id="CHEBI:37565"/>
    </ligand>
</feature>
<proteinExistence type="inferred from homology"/>
<evidence type="ECO:0000255" key="1">
    <source>
        <dbReference type="HAMAP-Rule" id="MF_00071"/>
    </source>
</evidence>
<sequence>MSDLSHIRNFSIIAHIDHGKSTLADRFIQMCGGLTAREMEAQVLDSMDLERERGITIKAHSVTLHYKAQDGKTYQLNFIDTPGHVDFTYEVSRSLAACEGALLVVDAGQGVEAQSVANCYTAIEQGLEVMPVLNKMDLPQADPDRVKDEIEKIIGIDATDAVACSAKSGMGVDEVLERLVQSIPAPEGEIDAPLQALIIDSWFDNYLGVVSLVRVRQGRVKKGDKILVKSTGKVHLVDSVGVFTPKHTQTADLKAGEVGFIIASIKDIHGAPVGDTLTLSNTPEVEVLPGFKKIQPQVYAGLFPVSSDDFEDFRDALQKLTLNDSSLQYMPESSDALGFGFRCGFLGMLHMEIIQERLEREYDLDLITTAPSVIYELELKTGETITVDNPSKLPDVSAVNDFREPIVTATILVPQEHLGNVITLCIEKRGVQRDMQFLGSQVQVRYDLPMNEVVLDFFDRLKSTSRGYASLDYHFDRYQSANLVKLDVLINGDKVDALALIVHRDNAAYKGRALTEKMKELIPRQMFDVAIQAAIGGQIIARTTVKALRKNVLAKCYGGDVSRKKKLLEKQKAGKKRMKQVGNVEIPQEAFLAVLRLDS</sequence>
<keyword id="KW-0997">Cell inner membrane</keyword>
<keyword id="KW-1003">Cell membrane</keyword>
<keyword id="KW-0342">GTP-binding</keyword>
<keyword id="KW-0378">Hydrolase</keyword>
<keyword id="KW-0472">Membrane</keyword>
<keyword id="KW-0547">Nucleotide-binding</keyword>
<keyword id="KW-0648">Protein biosynthesis</keyword>
<reference key="1">
    <citation type="journal article" date="2006" name="Nat. Biotechnol.">
        <title>Complete genome sequence of the entomopathogenic and metabolically versatile soil bacterium Pseudomonas entomophila.</title>
        <authorList>
            <person name="Vodovar N."/>
            <person name="Vallenet D."/>
            <person name="Cruveiller S."/>
            <person name="Rouy Z."/>
            <person name="Barbe V."/>
            <person name="Acosta C."/>
            <person name="Cattolico L."/>
            <person name="Jubin C."/>
            <person name="Lajus A."/>
            <person name="Segurens B."/>
            <person name="Vacherie B."/>
            <person name="Wincker P."/>
            <person name="Weissenbach J."/>
            <person name="Lemaitre B."/>
            <person name="Medigue C."/>
            <person name="Boccard F."/>
        </authorList>
    </citation>
    <scope>NUCLEOTIDE SEQUENCE [LARGE SCALE GENOMIC DNA]</scope>
    <source>
        <strain>L48</strain>
    </source>
</reference>